<gene>
    <name evidence="1" type="primary">proA</name>
    <name type="ordered locus">Cagg_3350</name>
</gene>
<organism>
    <name type="scientific">Chloroflexus aggregans (strain MD-66 / DSM 9485)</name>
    <dbReference type="NCBI Taxonomy" id="326427"/>
    <lineage>
        <taxon>Bacteria</taxon>
        <taxon>Bacillati</taxon>
        <taxon>Chloroflexota</taxon>
        <taxon>Chloroflexia</taxon>
        <taxon>Chloroflexales</taxon>
        <taxon>Chloroflexineae</taxon>
        <taxon>Chloroflexaceae</taxon>
        <taxon>Chloroflexus</taxon>
    </lineage>
</organism>
<protein>
    <recommendedName>
        <fullName evidence="1">Gamma-glutamyl phosphate reductase</fullName>
        <shortName evidence="1">GPR</shortName>
        <ecNumber evidence="1">1.2.1.41</ecNumber>
    </recommendedName>
    <alternativeName>
        <fullName evidence="1">Glutamate-5-semialdehyde dehydrogenase</fullName>
    </alternativeName>
    <alternativeName>
        <fullName evidence="1">Glutamyl-gamma-semialdehyde dehydrogenase</fullName>
        <shortName evidence="1">GSA dehydrogenase</shortName>
    </alternativeName>
</protein>
<comment type="function">
    <text evidence="1">Catalyzes the NADPH-dependent reduction of L-glutamate 5-phosphate into L-glutamate 5-semialdehyde and phosphate. The product spontaneously undergoes cyclization to form 1-pyrroline-5-carboxylate.</text>
</comment>
<comment type="catalytic activity">
    <reaction evidence="1">
        <text>L-glutamate 5-semialdehyde + phosphate + NADP(+) = L-glutamyl 5-phosphate + NADPH + H(+)</text>
        <dbReference type="Rhea" id="RHEA:19541"/>
        <dbReference type="ChEBI" id="CHEBI:15378"/>
        <dbReference type="ChEBI" id="CHEBI:43474"/>
        <dbReference type="ChEBI" id="CHEBI:57783"/>
        <dbReference type="ChEBI" id="CHEBI:58066"/>
        <dbReference type="ChEBI" id="CHEBI:58274"/>
        <dbReference type="ChEBI" id="CHEBI:58349"/>
        <dbReference type="EC" id="1.2.1.41"/>
    </reaction>
</comment>
<comment type="pathway">
    <text evidence="1">Amino-acid biosynthesis; L-proline biosynthesis; L-glutamate 5-semialdehyde from L-glutamate: step 2/2.</text>
</comment>
<comment type="subcellular location">
    <subcellularLocation>
        <location evidence="1">Cytoplasm</location>
    </subcellularLocation>
</comment>
<comment type="similarity">
    <text evidence="1">Belongs to the gamma-glutamyl phosphate reductase family.</text>
</comment>
<accession>B8G8E0</accession>
<dbReference type="EC" id="1.2.1.41" evidence="1"/>
<dbReference type="EMBL" id="CP001337">
    <property type="protein sequence ID" value="ACL26194.1"/>
    <property type="molecule type" value="Genomic_DNA"/>
</dbReference>
<dbReference type="RefSeq" id="WP_015942041.1">
    <property type="nucleotide sequence ID" value="NC_011831.1"/>
</dbReference>
<dbReference type="SMR" id="B8G8E0"/>
<dbReference type="STRING" id="326427.Cagg_3350"/>
<dbReference type="KEGG" id="cag:Cagg_3350"/>
<dbReference type="eggNOG" id="COG0014">
    <property type="taxonomic scope" value="Bacteria"/>
</dbReference>
<dbReference type="HOGENOM" id="CLU_030231_0_0_0"/>
<dbReference type="OrthoDB" id="9809970at2"/>
<dbReference type="UniPathway" id="UPA00098">
    <property type="reaction ID" value="UER00360"/>
</dbReference>
<dbReference type="Proteomes" id="UP000002508">
    <property type="component" value="Chromosome"/>
</dbReference>
<dbReference type="GO" id="GO:0005737">
    <property type="term" value="C:cytoplasm"/>
    <property type="evidence" value="ECO:0007669"/>
    <property type="project" value="UniProtKB-SubCell"/>
</dbReference>
<dbReference type="GO" id="GO:0004350">
    <property type="term" value="F:glutamate-5-semialdehyde dehydrogenase activity"/>
    <property type="evidence" value="ECO:0007669"/>
    <property type="project" value="UniProtKB-UniRule"/>
</dbReference>
<dbReference type="GO" id="GO:0050661">
    <property type="term" value="F:NADP binding"/>
    <property type="evidence" value="ECO:0007669"/>
    <property type="project" value="InterPro"/>
</dbReference>
<dbReference type="GO" id="GO:0055129">
    <property type="term" value="P:L-proline biosynthetic process"/>
    <property type="evidence" value="ECO:0007669"/>
    <property type="project" value="UniProtKB-UniRule"/>
</dbReference>
<dbReference type="CDD" id="cd07079">
    <property type="entry name" value="ALDH_F18-19_ProA-GPR"/>
    <property type="match status" value="1"/>
</dbReference>
<dbReference type="FunFam" id="3.40.309.10:FF:000006">
    <property type="entry name" value="Gamma-glutamyl phosphate reductase"/>
    <property type="match status" value="1"/>
</dbReference>
<dbReference type="Gene3D" id="3.40.605.10">
    <property type="entry name" value="Aldehyde Dehydrogenase, Chain A, domain 1"/>
    <property type="match status" value="1"/>
</dbReference>
<dbReference type="Gene3D" id="3.40.309.10">
    <property type="entry name" value="Aldehyde Dehydrogenase, Chain A, domain 2"/>
    <property type="match status" value="1"/>
</dbReference>
<dbReference type="HAMAP" id="MF_00412">
    <property type="entry name" value="ProA"/>
    <property type="match status" value="1"/>
</dbReference>
<dbReference type="InterPro" id="IPR016161">
    <property type="entry name" value="Ald_DH/histidinol_DH"/>
</dbReference>
<dbReference type="InterPro" id="IPR016163">
    <property type="entry name" value="Ald_DH_C"/>
</dbReference>
<dbReference type="InterPro" id="IPR016162">
    <property type="entry name" value="Ald_DH_N"/>
</dbReference>
<dbReference type="InterPro" id="IPR015590">
    <property type="entry name" value="Aldehyde_DH_dom"/>
</dbReference>
<dbReference type="InterPro" id="IPR020593">
    <property type="entry name" value="G-glutamylP_reductase_CS"/>
</dbReference>
<dbReference type="InterPro" id="IPR012134">
    <property type="entry name" value="Glu-5-SA_DH"/>
</dbReference>
<dbReference type="InterPro" id="IPR000965">
    <property type="entry name" value="GPR_dom"/>
</dbReference>
<dbReference type="NCBIfam" id="NF001221">
    <property type="entry name" value="PRK00197.1"/>
    <property type="match status" value="1"/>
</dbReference>
<dbReference type="NCBIfam" id="TIGR00407">
    <property type="entry name" value="proA"/>
    <property type="match status" value="1"/>
</dbReference>
<dbReference type="PANTHER" id="PTHR11063:SF8">
    <property type="entry name" value="DELTA-1-PYRROLINE-5-CARBOXYLATE SYNTHASE"/>
    <property type="match status" value="1"/>
</dbReference>
<dbReference type="PANTHER" id="PTHR11063">
    <property type="entry name" value="GLUTAMATE SEMIALDEHYDE DEHYDROGENASE"/>
    <property type="match status" value="1"/>
</dbReference>
<dbReference type="Pfam" id="PF00171">
    <property type="entry name" value="Aldedh"/>
    <property type="match status" value="1"/>
</dbReference>
<dbReference type="PIRSF" id="PIRSF000151">
    <property type="entry name" value="GPR"/>
    <property type="match status" value="1"/>
</dbReference>
<dbReference type="SUPFAM" id="SSF53720">
    <property type="entry name" value="ALDH-like"/>
    <property type="match status" value="1"/>
</dbReference>
<dbReference type="PROSITE" id="PS01223">
    <property type="entry name" value="PROA"/>
    <property type="match status" value="1"/>
</dbReference>
<feature type="chain" id="PRO_1000193585" description="Gamma-glutamyl phosphate reductase">
    <location>
        <begin position="1"/>
        <end position="422"/>
    </location>
</feature>
<name>PROA_CHLAD</name>
<reference key="1">
    <citation type="submission" date="2008-12" db="EMBL/GenBank/DDBJ databases">
        <title>Complete sequence of Chloroflexus aggregans DSM 9485.</title>
        <authorList>
            <consortium name="US DOE Joint Genome Institute"/>
            <person name="Lucas S."/>
            <person name="Copeland A."/>
            <person name="Lapidus A."/>
            <person name="Glavina del Rio T."/>
            <person name="Dalin E."/>
            <person name="Tice H."/>
            <person name="Pitluck S."/>
            <person name="Foster B."/>
            <person name="Larimer F."/>
            <person name="Land M."/>
            <person name="Hauser L."/>
            <person name="Kyrpides N."/>
            <person name="Mikhailova N."/>
            <person name="Bryant D.A."/>
            <person name="Richardson P."/>
        </authorList>
    </citation>
    <scope>NUCLEOTIDE SEQUENCE [LARGE SCALE GENOMIC DNA]</scope>
    <source>
        <strain>MD-66 / DSM 9485</strain>
    </source>
</reference>
<keyword id="KW-0028">Amino-acid biosynthesis</keyword>
<keyword id="KW-0963">Cytoplasm</keyword>
<keyword id="KW-0521">NADP</keyword>
<keyword id="KW-0560">Oxidoreductase</keyword>
<keyword id="KW-0641">Proline biosynthesis</keyword>
<evidence type="ECO:0000255" key="1">
    <source>
        <dbReference type="HAMAP-Rule" id="MF_00412"/>
    </source>
</evidence>
<sequence>MIDLETIGRRAKTAARTLAKVSTEQKNAALHAIADGLLARQDEILSANAADVADAERAGTPPAIVDRMLLTEARLATIANDCRKVAELPDPVGEIFDRRELPSGLRLYKRRVPIGVIGAIYEARPNVTVDIAALCLKAGNAVILRGGSDIARSVAATTTVIAEALEQAGLPIFAVQSITDPDRELVRQLLRLDRYVDMIIPRGGASLHRFCVENATVPVIVGGMGVSHIYVEPSADFARAVPVVVNAKVQRPGACNALDTLLVHRAAAPVFLPMVAAALAEYNVELRCDLETLAILADAPGHENWQLRPAEPADFGREFLALIVAIKVVGDIDEALDHIAQYGGHSEAILTGDPASAARFTREVDATAVFVNASTRFNDGGQFGLGAEVAISTNRLHARGPMGLQELTTYTWIGEGDYLVRA</sequence>
<proteinExistence type="inferred from homology"/>